<accession>A6LFT6</accession>
<protein>
    <recommendedName>
        <fullName evidence="1">Cysteine--tRNA ligase</fullName>
        <ecNumber evidence="1">6.1.1.16</ecNumber>
    </recommendedName>
    <alternativeName>
        <fullName evidence="1">Cysteinyl-tRNA synthetase</fullName>
        <shortName evidence="1">CysRS</shortName>
    </alternativeName>
</protein>
<comment type="catalytic activity">
    <reaction evidence="1">
        <text>tRNA(Cys) + L-cysteine + ATP = L-cysteinyl-tRNA(Cys) + AMP + diphosphate</text>
        <dbReference type="Rhea" id="RHEA:17773"/>
        <dbReference type="Rhea" id="RHEA-COMP:9661"/>
        <dbReference type="Rhea" id="RHEA-COMP:9679"/>
        <dbReference type="ChEBI" id="CHEBI:30616"/>
        <dbReference type="ChEBI" id="CHEBI:33019"/>
        <dbReference type="ChEBI" id="CHEBI:35235"/>
        <dbReference type="ChEBI" id="CHEBI:78442"/>
        <dbReference type="ChEBI" id="CHEBI:78517"/>
        <dbReference type="ChEBI" id="CHEBI:456215"/>
        <dbReference type="EC" id="6.1.1.16"/>
    </reaction>
</comment>
<comment type="cofactor">
    <cofactor evidence="1">
        <name>Zn(2+)</name>
        <dbReference type="ChEBI" id="CHEBI:29105"/>
    </cofactor>
    <text evidence="1">Binds 1 zinc ion per subunit.</text>
</comment>
<comment type="subunit">
    <text evidence="1">Monomer.</text>
</comment>
<comment type="subcellular location">
    <subcellularLocation>
        <location evidence="1">Cytoplasm</location>
    </subcellularLocation>
</comment>
<comment type="similarity">
    <text evidence="1">Belongs to the class-I aminoacyl-tRNA synthetase family.</text>
</comment>
<proteinExistence type="inferred from homology"/>
<keyword id="KW-0030">Aminoacyl-tRNA synthetase</keyword>
<keyword id="KW-0067">ATP-binding</keyword>
<keyword id="KW-0963">Cytoplasm</keyword>
<keyword id="KW-0436">Ligase</keyword>
<keyword id="KW-0479">Metal-binding</keyword>
<keyword id="KW-0547">Nucleotide-binding</keyword>
<keyword id="KW-0648">Protein biosynthesis</keyword>
<keyword id="KW-1185">Reference proteome</keyword>
<keyword id="KW-0862">Zinc</keyword>
<feature type="chain" id="PRO_0000332863" description="Cysteine--tRNA ligase">
    <location>
        <begin position="1"/>
        <end position="491"/>
    </location>
</feature>
<feature type="short sequence motif" description="'HIGH' region">
    <location>
        <begin position="33"/>
        <end position="43"/>
    </location>
</feature>
<feature type="short sequence motif" description="'KMSKS' region">
    <location>
        <begin position="283"/>
        <end position="287"/>
    </location>
</feature>
<feature type="binding site" evidence="1">
    <location>
        <position position="31"/>
    </location>
    <ligand>
        <name>Zn(2+)</name>
        <dbReference type="ChEBI" id="CHEBI:29105"/>
    </ligand>
</feature>
<feature type="binding site" evidence="1">
    <location>
        <position position="226"/>
    </location>
    <ligand>
        <name>Zn(2+)</name>
        <dbReference type="ChEBI" id="CHEBI:29105"/>
    </ligand>
</feature>
<feature type="binding site" evidence="1">
    <location>
        <position position="251"/>
    </location>
    <ligand>
        <name>Zn(2+)</name>
        <dbReference type="ChEBI" id="CHEBI:29105"/>
    </ligand>
</feature>
<feature type="binding site" evidence="1">
    <location>
        <position position="255"/>
    </location>
    <ligand>
        <name>Zn(2+)</name>
        <dbReference type="ChEBI" id="CHEBI:29105"/>
    </ligand>
</feature>
<feature type="binding site" evidence="1">
    <location>
        <position position="286"/>
    </location>
    <ligand>
        <name>ATP</name>
        <dbReference type="ChEBI" id="CHEBI:30616"/>
    </ligand>
</feature>
<name>SYC_PARD8</name>
<sequence length="491" mass="55870">MEHPLNIYNTLTRKKEQFIPLHEPHVGMYVCGPTVYGDAHLGHARPAITFDLLFRYLTHLGYKVRYVRNITDVGHLEHDADDGEDKIAKKARLEQLEPMEVVQYYLNRYHQAMDALNVLPPSIEPHASGHIIEQIELVKKILDNGYAYESQGSVYFDVEKYNKDHKYGILSGRNIEDMLNTTRALDGQDEKHNAIDFALWKCAQPEHIMRWPSPWSDGFPGWHCECTAMGKKYLGEHFDIHGGGMDLIFPHHECEIAQAVASQGDDMVHYWMHNNMITINGQKMGKSLGNFITLEQFFTGDHPSLQQAYSAMTIRFFILQAHYRSTVDFSNEALQAAEKGLSRLMEAYGHLMKLQPSATSTVDTKGLREKCFEAMNDDLNSPIVISHLFDATRAINSVKDGKATLSEEDLKELQEVFHLFLFDILGMKDEASASGNHYEAFGKAVDLLLSIRQQAKANKDWATSDKIRNELTAMGFEIKDTKDGAEWKLSK</sequence>
<dbReference type="EC" id="6.1.1.16" evidence="1"/>
<dbReference type="EMBL" id="CP000140">
    <property type="protein sequence ID" value="ABR44550.1"/>
    <property type="molecule type" value="Genomic_DNA"/>
</dbReference>
<dbReference type="RefSeq" id="WP_011967023.1">
    <property type="nucleotide sequence ID" value="NC_009615.1"/>
</dbReference>
<dbReference type="SMR" id="A6LFT6"/>
<dbReference type="STRING" id="435591.BDI_2837"/>
<dbReference type="PaxDb" id="435591-BDI_2837"/>
<dbReference type="KEGG" id="pdi:BDI_2837"/>
<dbReference type="PATRIC" id="fig|435591.13.peg.2806"/>
<dbReference type="eggNOG" id="COG0215">
    <property type="taxonomic scope" value="Bacteria"/>
</dbReference>
<dbReference type="HOGENOM" id="CLU_013528_0_1_10"/>
<dbReference type="BioCyc" id="PDIS435591:G1G5A-2913-MONOMER"/>
<dbReference type="Proteomes" id="UP000000566">
    <property type="component" value="Chromosome"/>
</dbReference>
<dbReference type="GO" id="GO:0005829">
    <property type="term" value="C:cytosol"/>
    <property type="evidence" value="ECO:0007669"/>
    <property type="project" value="TreeGrafter"/>
</dbReference>
<dbReference type="GO" id="GO:0005524">
    <property type="term" value="F:ATP binding"/>
    <property type="evidence" value="ECO:0007669"/>
    <property type="project" value="UniProtKB-UniRule"/>
</dbReference>
<dbReference type="GO" id="GO:0004817">
    <property type="term" value="F:cysteine-tRNA ligase activity"/>
    <property type="evidence" value="ECO:0007669"/>
    <property type="project" value="UniProtKB-UniRule"/>
</dbReference>
<dbReference type="GO" id="GO:0008270">
    <property type="term" value="F:zinc ion binding"/>
    <property type="evidence" value="ECO:0007669"/>
    <property type="project" value="UniProtKB-UniRule"/>
</dbReference>
<dbReference type="GO" id="GO:0006423">
    <property type="term" value="P:cysteinyl-tRNA aminoacylation"/>
    <property type="evidence" value="ECO:0007669"/>
    <property type="project" value="UniProtKB-UniRule"/>
</dbReference>
<dbReference type="CDD" id="cd00672">
    <property type="entry name" value="CysRS_core"/>
    <property type="match status" value="1"/>
</dbReference>
<dbReference type="FunFam" id="3.40.50.620:FF:000140">
    <property type="entry name" value="Cysteine--tRNA ligase"/>
    <property type="match status" value="1"/>
</dbReference>
<dbReference type="Gene3D" id="1.20.120.1910">
    <property type="entry name" value="Cysteine-tRNA ligase, C-terminal anti-codon recognition domain"/>
    <property type="match status" value="1"/>
</dbReference>
<dbReference type="Gene3D" id="3.40.50.620">
    <property type="entry name" value="HUPs"/>
    <property type="match status" value="1"/>
</dbReference>
<dbReference type="HAMAP" id="MF_00041">
    <property type="entry name" value="Cys_tRNA_synth"/>
    <property type="match status" value="1"/>
</dbReference>
<dbReference type="InterPro" id="IPR015803">
    <property type="entry name" value="Cys-tRNA-ligase"/>
</dbReference>
<dbReference type="InterPro" id="IPR015273">
    <property type="entry name" value="Cys-tRNA-synt_Ia_DALR"/>
</dbReference>
<dbReference type="InterPro" id="IPR024909">
    <property type="entry name" value="Cys-tRNA/MSH_ligase"/>
</dbReference>
<dbReference type="InterPro" id="IPR056411">
    <property type="entry name" value="CysS_C"/>
</dbReference>
<dbReference type="InterPro" id="IPR014729">
    <property type="entry name" value="Rossmann-like_a/b/a_fold"/>
</dbReference>
<dbReference type="InterPro" id="IPR032678">
    <property type="entry name" value="tRNA-synt_1_cat_dom"/>
</dbReference>
<dbReference type="InterPro" id="IPR009080">
    <property type="entry name" value="tRNAsynth_Ia_anticodon-bd"/>
</dbReference>
<dbReference type="NCBIfam" id="TIGR00435">
    <property type="entry name" value="cysS"/>
    <property type="match status" value="1"/>
</dbReference>
<dbReference type="PANTHER" id="PTHR10890:SF3">
    <property type="entry name" value="CYSTEINE--TRNA LIGASE, CYTOPLASMIC"/>
    <property type="match status" value="1"/>
</dbReference>
<dbReference type="PANTHER" id="PTHR10890">
    <property type="entry name" value="CYSTEINYL-TRNA SYNTHETASE"/>
    <property type="match status" value="1"/>
</dbReference>
<dbReference type="Pfam" id="PF23493">
    <property type="entry name" value="CysS_C"/>
    <property type="match status" value="1"/>
</dbReference>
<dbReference type="Pfam" id="PF09190">
    <property type="entry name" value="DALR_2"/>
    <property type="match status" value="1"/>
</dbReference>
<dbReference type="Pfam" id="PF01406">
    <property type="entry name" value="tRNA-synt_1e"/>
    <property type="match status" value="1"/>
</dbReference>
<dbReference type="PRINTS" id="PR00983">
    <property type="entry name" value="TRNASYNTHCYS"/>
</dbReference>
<dbReference type="SMART" id="SM00840">
    <property type="entry name" value="DALR_2"/>
    <property type="match status" value="1"/>
</dbReference>
<dbReference type="SUPFAM" id="SSF47323">
    <property type="entry name" value="Anticodon-binding domain of a subclass of class I aminoacyl-tRNA synthetases"/>
    <property type="match status" value="1"/>
</dbReference>
<dbReference type="SUPFAM" id="SSF52374">
    <property type="entry name" value="Nucleotidylyl transferase"/>
    <property type="match status" value="1"/>
</dbReference>
<reference key="1">
    <citation type="journal article" date="2007" name="PLoS Biol.">
        <title>Evolution of symbiotic bacteria in the distal human intestine.</title>
        <authorList>
            <person name="Xu J."/>
            <person name="Mahowald M.A."/>
            <person name="Ley R.E."/>
            <person name="Lozupone C.A."/>
            <person name="Hamady M."/>
            <person name="Martens E.C."/>
            <person name="Henrissat B."/>
            <person name="Coutinho P.M."/>
            <person name="Minx P."/>
            <person name="Latreille P."/>
            <person name="Cordum H."/>
            <person name="Van Brunt A."/>
            <person name="Kim K."/>
            <person name="Fulton R.S."/>
            <person name="Fulton L.A."/>
            <person name="Clifton S.W."/>
            <person name="Wilson R.K."/>
            <person name="Knight R.D."/>
            <person name="Gordon J.I."/>
        </authorList>
    </citation>
    <scope>NUCLEOTIDE SEQUENCE [LARGE SCALE GENOMIC DNA]</scope>
    <source>
        <strain>ATCC 8503 / DSM 20701 / CIP 104284 / JCM 5825 / NCTC 11152</strain>
    </source>
</reference>
<gene>
    <name evidence="1" type="primary">cysS</name>
    <name type="ordered locus">BDI_2837</name>
</gene>
<organism>
    <name type="scientific">Parabacteroides distasonis (strain ATCC 8503 / DSM 20701 / CIP 104284 / JCM 5825 / NCTC 11152)</name>
    <dbReference type="NCBI Taxonomy" id="435591"/>
    <lineage>
        <taxon>Bacteria</taxon>
        <taxon>Pseudomonadati</taxon>
        <taxon>Bacteroidota</taxon>
        <taxon>Bacteroidia</taxon>
        <taxon>Bacteroidales</taxon>
        <taxon>Tannerellaceae</taxon>
        <taxon>Parabacteroides</taxon>
    </lineage>
</organism>
<evidence type="ECO:0000255" key="1">
    <source>
        <dbReference type="HAMAP-Rule" id="MF_00041"/>
    </source>
</evidence>